<organism>
    <name type="scientific">Uperoleia mjobergii</name>
    <name type="common">Mjoberg's toadlet</name>
    <name type="synonym">Pseudophryne mjobergii</name>
    <dbReference type="NCBI Taxonomy" id="104954"/>
    <lineage>
        <taxon>Eukaryota</taxon>
        <taxon>Metazoa</taxon>
        <taxon>Chordata</taxon>
        <taxon>Craniata</taxon>
        <taxon>Vertebrata</taxon>
        <taxon>Euteleostomi</taxon>
        <taxon>Amphibia</taxon>
        <taxon>Batrachia</taxon>
        <taxon>Anura</taxon>
        <taxon>Neobatrachia</taxon>
        <taxon>Myobatrachoidea</taxon>
        <taxon>Myobatrachidae</taxon>
        <taxon>Myobatrachinae</taxon>
        <taxon>Uperoleia</taxon>
    </lineage>
</organism>
<name>UPE28_UPEMJ</name>
<accession>P82040</accession>
<reference key="1">
    <citation type="journal article" date="1996" name="Aust. J. Chem.">
        <title>New antibiotic uperin peptides from the dorsal glands of the australian toadlet Uperoleia mjobergii.</title>
        <authorList>
            <person name="Bradford A.M."/>
            <person name="Bowie J.H."/>
            <person name="Tyler M.J."/>
            <person name="Wallace J.C."/>
        </authorList>
    </citation>
    <scope>PROTEIN SEQUENCE</scope>
    <scope>MASS SPECTROMETRY</scope>
    <source>
        <tissue>Skin secretion</tissue>
    </source>
</reference>
<comment type="function">
    <text>Shows antibacterial activity against B.cereus, L.lactis, S.epidermidis and S.uberis.</text>
</comment>
<comment type="subcellular location">
    <subcellularLocation>
        <location>Secreted</location>
    </subcellularLocation>
</comment>
<comment type="tissue specificity">
    <text>Expressed by the skin dorsal glands.</text>
</comment>
<comment type="mass spectrometry" mass="1978.0" method="FAB" evidence="1"/>
<keyword id="KW-0878">Amphibian defense peptide</keyword>
<keyword id="KW-0903">Direct protein sequencing</keyword>
<keyword id="KW-0964">Secreted</keyword>
<protein>
    <recommendedName>
        <fullName>Uperin-2.8</fullName>
    </recommendedName>
</protein>
<dbReference type="GO" id="GO:0005576">
    <property type="term" value="C:extracellular region"/>
    <property type="evidence" value="ECO:0007669"/>
    <property type="project" value="UniProtKB-SubCell"/>
</dbReference>
<dbReference type="GO" id="GO:0006952">
    <property type="term" value="P:defense response"/>
    <property type="evidence" value="ECO:0007669"/>
    <property type="project" value="UniProtKB-KW"/>
</dbReference>
<evidence type="ECO:0000269" key="1">
    <source ref="1"/>
</evidence>
<sequence length="19" mass="1979">GILDVAKTLVGKLRNVLGI</sequence>
<feature type="peptide" id="PRO_0000043853" description="Uperin-2.8">
    <location>
        <begin position="1"/>
        <end position="19"/>
    </location>
</feature>
<proteinExistence type="evidence at protein level"/>